<dbReference type="EC" id="5.3.1.23" evidence="1"/>
<dbReference type="EMBL" id="BA000001">
    <property type="protein sequence ID" value="BAA29793.1"/>
    <property type="molecule type" value="Genomic_DNA"/>
</dbReference>
<dbReference type="PIR" id="G71116">
    <property type="entry name" value="G71116"/>
</dbReference>
<dbReference type="RefSeq" id="WP_010884797.1">
    <property type="nucleotide sequence ID" value="NC_000961.1"/>
</dbReference>
<dbReference type="PDB" id="6A34">
    <property type="method" value="X-ray"/>
    <property type="resolution" value="2.30 A"/>
    <property type="chains" value="A/B=1-364"/>
</dbReference>
<dbReference type="PDB" id="6A35">
    <property type="method" value="X-ray"/>
    <property type="resolution" value="2.65 A"/>
    <property type="chains" value="A/B/C/D=1-364"/>
</dbReference>
<dbReference type="PDBsum" id="6A34"/>
<dbReference type="PDBsum" id="6A35"/>
<dbReference type="SMR" id="O58433"/>
<dbReference type="STRING" id="70601.gene:9377649"/>
<dbReference type="EnsemblBacteria" id="BAA29793">
    <property type="protein sequence ID" value="BAA29793"/>
    <property type="gene ID" value="BAA29793"/>
</dbReference>
<dbReference type="GeneID" id="1443032"/>
<dbReference type="KEGG" id="pho:PH0702"/>
<dbReference type="eggNOG" id="arCOG01123">
    <property type="taxonomic scope" value="Archaea"/>
</dbReference>
<dbReference type="OrthoDB" id="45195at2157"/>
<dbReference type="BRENDA" id="5.3.1.23">
    <property type="organism ID" value="5244"/>
</dbReference>
<dbReference type="Proteomes" id="UP000000752">
    <property type="component" value="Chromosome"/>
</dbReference>
<dbReference type="GO" id="GO:0046523">
    <property type="term" value="F:S-methyl-5-thioribose-1-phosphate isomerase activity"/>
    <property type="evidence" value="ECO:0007669"/>
    <property type="project" value="UniProtKB-UniRule"/>
</dbReference>
<dbReference type="GO" id="GO:0019509">
    <property type="term" value="P:L-methionine salvage from methylthioadenosine"/>
    <property type="evidence" value="ECO:0007669"/>
    <property type="project" value="UniProtKB-UniRule"/>
</dbReference>
<dbReference type="FunFam" id="1.20.120.420:FF:000001">
    <property type="entry name" value="Methylthioribose-1-phosphate isomerase"/>
    <property type="match status" value="1"/>
</dbReference>
<dbReference type="FunFam" id="3.40.50.10470:FF:000006">
    <property type="entry name" value="Methylthioribose-1-phosphate isomerase"/>
    <property type="match status" value="1"/>
</dbReference>
<dbReference type="Gene3D" id="1.20.120.420">
    <property type="entry name" value="translation initiation factor eif-2b, domain 1"/>
    <property type="match status" value="1"/>
</dbReference>
<dbReference type="Gene3D" id="3.40.50.10470">
    <property type="entry name" value="Translation initiation factor eif-2b, domain 2"/>
    <property type="match status" value="1"/>
</dbReference>
<dbReference type="HAMAP" id="MF_01678">
    <property type="entry name" value="Salvage_MtnA"/>
    <property type="match status" value="1"/>
</dbReference>
<dbReference type="InterPro" id="IPR000649">
    <property type="entry name" value="IF-2B-related"/>
</dbReference>
<dbReference type="InterPro" id="IPR005251">
    <property type="entry name" value="IF-M1Pi"/>
</dbReference>
<dbReference type="InterPro" id="IPR042529">
    <property type="entry name" value="IF_2B-like_C"/>
</dbReference>
<dbReference type="InterPro" id="IPR011559">
    <property type="entry name" value="Initiation_fac_2B_a/b/d"/>
</dbReference>
<dbReference type="InterPro" id="IPR027363">
    <property type="entry name" value="M1Pi_N"/>
</dbReference>
<dbReference type="InterPro" id="IPR037171">
    <property type="entry name" value="NagB/RpiA_transferase-like"/>
</dbReference>
<dbReference type="NCBIfam" id="TIGR00524">
    <property type="entry name" value="eIF-2B_rel"/>
    <property type="match status" value="1"/>
</dbReference>
<dbReference type="NCBIfam" id="NF004326">
    <property type="entry name" value="PRK05720.1"/>
    <property type="match status" value="1"/>
</dbReference>
<dbReference type="NCBIfam" id="TIGR00512">
    <property type="entry name" value="salvage_mtnA"/>
    <property type="match status" value="1"/>
</dbReference>
<dbReference type="PANTHER" id="PTHR43475">
    <property type="entry name" value="METHYLTHIORIBOSE-1-PHOSPHATE ISOMERASE"/>
    <property type="match status" value="1"/>
</dbReference>
<dbReference type="PANTHER" id="PTHR43475:SF1">
    <property type="entry name" value="METHYLTHIORIBOSE-1-PHOSPHATE ISOMERASE"/>
    <property type="match status" value="1"/>
</dbReference>
<dbReference type="Pfam" id="PF01008">
    <property type="entry name" value="IF-2B"/>
    <property type="match status" value="1"/>
</dbReference>
<dbReference type="SUPFAM" id="SSF100950">
    <property type="entry name" value="NagB/RpiA/CoA transferase-like"/>
    <property type="match status" value="1"/>
</dbReference>
<gene>
    <name type="ordered locus">PH0702</name>
</gene>
<organism>
    <name type="scientific">Pyrococcus horikoshii (strain ATCC 700860 / DSM 12428 / JCM 9974 / NBRC 100139 / OT-3)</name>
    <dbReference type="NCBI Taxonomy" id="70601"/>
    <lineage>
        <taxon>Archaea</taxon>
        <taxon>Methanobacteriati</taxon>
        <taxon>Methanobacteriota</taxon>
        <taxon>Thermococci</taxon>
        <taxon>Thermococcales</taxon>
        <taxon>Thermococcaceae</taxon>
        <taxon>Pyrococcus</taxon>
    </lineage>
</organism>
<accession>O58433</accession>
<protein>
    <recommendedName>
        <fullName evidence="1">Putative methylthioribose-1-phosphate isomerase</fullName>
        <shortName evidence="1">M1Pi</shortName>
        <shortName evidence="1">MTR-1-P isomerase</shortName>
        <ecNumber evidence="1">5.3.1.23</ecNumber>
    </recommendedName>
    <alternativeName>
        <fullName evidence="1">MTNA-like protein</fullName>
        <shortName evidence="1">aMTNA</shortName>
    </alternativeName>
    <alternativeName>
        <fullName evidence="1">S-methyl-5-thioribose-1-phosphate isomerase</fullName>
    </alternativeName>
</protein>
<sequence>MEIRYTPKELTKLPRTVEYKNKSVYMINQRLLPKEFKVEKFSKVEEVAEAIKNMTVRGAPAIGAAAGFGLALYAETSKAKTKEEFLDGFEKAYEILKNTRPTAVNLFWALNRIKKLVEEHSEDPLDEIKRLIVQEAYKIADEDVEANLRMGHYGAEVLPEGNILTHCNAGSLATVHLGTVGSVVRVMHKDGSLKLLWLDETRPVLQGARLSAWEYSYDGLNVKLIADNAAAFVMQQGFVDAIIVGADRIVANGDFANKIGTYMLAVLAREHGIPFFAVAPLSSIDMELKSGKDIPIEERSPEEVLTCGGCRIAPDVPVYNPAFDVTPHKYLTGIITDRGVVWPPFKRNLKKLFEVNKSGGDEAV</sequence>
<reference key="1">
    <citation type="journal article" date="1998" name="DNA Res.">
        <title>Complete sequence and gene organization of the genome of a hyper-thermophilic archaebacterium, Pyrococcus horikoshii OT3.</title>
        <authorList>
            <person name="Kawarabayasi Y."/>
            <person name="Sawada M."/>
            <person name="Horikawa H."/>
            <person name="Haikawa Y."/>
            <person name="Hino Y."/>
            <person name="Yamamoto S."/>
            <person name="Sekine M."/>
            <person name="Baba S."/>
            <person name="Kosugi H."/>
            <person name="Hosoyama A."/>
            <person name="Nagai Y."/>
            <person name="Sakai M."/>
            <person name="Ogura K."/>
            <person name="Otsuka R."/>
            <person name="Nakazawa H."/>
            <person name="Takamiya M."/>
            <person name="Ohfuku Y."/>
            <person name="Funahashi T."/>
            <person name="Tanaka T."/>
            <person name="Kudoh Y."/>
            <person name="Yamazaki J."/>
            <person name="Kushida N."/>
            <person name="Oguchi A."/>
            <person name="Aoki K."/>
            <person name="Yoshizawa T."/>
            <person name="Nakamura Y."/>
            <person name="Robb F.T."/>
            <person name="Horikoshi K."/>
            <person name="Masuchi Y."/>
            <person name="Shizuya H."/>
            <person name="Kikuchi H."/>
        </authorList>
    </citation>
    <scope>NUCLEOTIDE SEQUENCE [LARGE SCALE GENOMIC DNA]</scope>
    <source>
        <strain>ATCC 700860 / DSM 12428 / JCM 9974 / NBRC 100139 / OT-3</strain>
    </source>
</reference>
<name>MTNA_PYRHO</name>
<feature type="chain" id="PRO_0000156090" description="Putative methylthioribose-1-phosphate isomerase">
    <location>
        <begin position="1"/>
        <end position="364"/>
    </location>
</feature>
<feature type="active site" description="Proton donor" evidence="1">
    <location>
        <position position="247"/>
    </location>
</feature>
<feature type="binding site" evidence="1">
    <location>
        <begin position="57"/>
        <end position="59"/>
    </location>
    <ligand>
        <name>substrate</name>
    </ligand>
</feature>
<feature type="binding site" evidence="1">
    <location>
        <position position="100"/>
    </location>
    <ligand>
        <name>substrate</name>
    </ligand>
</feature>
<feature type="binding site" evidence="1">
    <location>
        <position position="206"/>
    </location>
    <ligand>
        <name>substrate</name>
    </ligand>
</feature>
<feature type="binding site" evidence="1">
    <location>
        <begin position="257"/>
        <end position="258"/>
    </location>
    <ligand>
        <name>substrate</name>
    </ligand>
</feature>
<feature type="site" description="Transition state stabilizer" evidence="1">
    <location>
        <position position="167"/>
    </location>
</feature>
<feature type="helix" evidence="3">
    <location>
        <begin position="7"/>
        <end position="10"/>
    </location>
</feature>
<feature type="strand" evidence="3">
    <location>
        <begin position="16"/>
        <end position="20"/>
    </location>
</feature>
<feature type="strand" evidence="3">
    <location>
        <begin position="23"/>
        <end position="27"/>
    </location>
</feature>
<feature type="turn" evidence="3">
    <location>
        <begin position="29"/>
        <end position="34"/>
    </location>
</feature>
<feature type="strand" evidence="3">
    <location>
        <begin position="38"/>
        <end position="41"/>
    </location>
</feature>
<feature type="helix" evidence="3">
    <location>
        <begin position="44"/>
        <end position="52"/>
    </location>
</feature>
<feature type="helix" evidence="3">
    <location>
        <begin position="59"/>
        <end position="76"/>
    </location>
</feature>
<feature type="helix" evidence="3">
    <location>
        <begin position="82"/>
        <end position="97"/>
    </location>
</feature>
<feature type="strand" evidence="3">
    <location>
        <begin position="99"/>
        <end position="102"/>
    </location>
</feature>
<feature type="helix" evidence="3">
    <location>
        <begin position="104"/>
        <end position="119"/>
    </location>
</feature>
<feature type="turn" evidence="3">
    <location>
        <begin position="120"/>
        <end position="122"/>
    </location>
</feature>
<feature type="helix" evidence="3">
    <location>
        <begin position="125"/>
        <end position="157"/>
    </location>
</feature>
<feature type="strand" evidence="3">
    <location>
        <begin position="160"/>
        <end position="165"/>
    </location>
</feature>
<feature type="helix" evidence="3">
    <location>
        <begin position="171"/>
        <end position="173"/>
    </location>
</feature>
<feature type="strand" evidence="3">
    <location>
        <begin position="174"/>
        <end position="179"/>
    </location>
</feature>
<feature type="helix" evidence="3">
    <location>
        <begin position="180"/>
        <end position="189"/>
    </location>
</feature>
<feature type="strand" evidence="3">
    <location>
        <begin position="193"/>
        <end position="199"/>
    </location>
</feature>
<feature type="turn" evidence="3">
    <location>
        <begin position="202"/>
        <end position="205"/>
    </location>
</feature>
<feature type="helix" evidence="3">
    <location>
        <begin position="206"/>
        <end position="209"/>
    </location>
</feature>
<feature type="helix" evidence="3">
    <location>
        <begin position="211"/>
        <end position="217"/>
    </location>
</feature>
<feature type="strand" evidence="3">
    <location>
        <begin position="222"/>
        <end position="225"/>
    </location>
</feature>
<feature type="helix" evidence="3">
    <location>
        <begin position="227"/>
        <end position="229"/>
    </location>
</feature>
<feature type="helix" evidence="3">
    <location>
        <begin position="230"/>
        <end position="235"/>
    </location>
</feature>
<feature type="strand" evidence="3">
    <location>
        <begin position="240"/>
        <end position="244"/>
    </location>
</feature>
<feature type="strand" evidence="3">
    <location>
        <begin position="247"/>
        <end position="250"/>
    </location>
</feature>
<feature type="strand" evidence="3">
    <location>
        <begin position="255"/>
        <end position="258"/>
    </location>
</feature>
<feature type="helix" evidence="3">
    <location>
        <begin position="261"/>
        <end position="270"/>
    </location>
</feature>
<feature type="strand" evidence="3">
    <location>
        <begin position="275"/>
        <end position="278"/>
    </location>
</feature>
<feature type="helix" evidence="3">
    <location>
        <begin position="281"/>
        <end position="283"/>
    </location>
</feature>
<feature type="helix" evidence="3">
    <location>
        <begin position="291"/>
        <end position="293"/>
    </location>
</feature>
<feature type="helix" evidence="3">
    <location>
        <begin position="302"/>
        <end position="305"/>
    </location>
</feature>
<feature type="strand" evidence="3">
    <location>
        <begin position="321"/>
        <end position="326"/>
    </location>
</feature>
<feature type="helix" evidence="3">
    <location>
        <begin position="328"/>
        <end position="330"/>
    </location>
</feature>
<feature type="strand" evidence="3">
    <location>
        <begin position="332"/>
        <end position="336"/>
    </location>
</feature>
<feature type="strand" evidence="3">
    <location>
        <begin position="339"/>
        <end position="341"/>
    </location>
</feature>
<feature type="helix" evidence="3">
    <location>
        <begin position="345"/>
        <end position="354"/>
    </location>
</feature>
<evidence type="ECO:0000255" key="1">
    <source>
        <dbReference type="HAMAP-Rule" id="MF_01678"/>
    </source>
</evidence>
<evidence type="ECO:0000305" key="2"/>
<evidence type="ECO:0007829" key="3">
    <source>
        <dbReference type="PDB" id="6A34"/>
    </source>
</evidence>
<proteinExistence type="evidence at protein level"/>
<keyword id="KW-0002">3D-structure</keyword>
<keyword id="KW-0028">Amino-acid biosynthesis</keyword>
<keyword id="KW-0413">Isomerase</keyword>
<keyword id="KW-0486">Methionine biosynthesis</keyword>
<comment type="function">
    <text evidence="1">Catalyzes the interconversion of methylthioribose-1-phosphate (MTR-1-P) into methylthioribulose-1-phosphate (MTRu-1-P).</text>
</comment>
<comment type="catalytic activity">
    <reaction evidence="1">
        <text>5-(methylsulfanyl)-alpha-D-ribose 1-phosphate = 5-(methylsulfanyl)-D-ribulose 1-phosphate</text>
        <dbReference type="Rhea" id="RHEA:19989"/>
        <dbReference type="ChEBI" id="CHEBI:58533"/>
        <dbReference type="ChEBI" id="CHEBI:58548"/>
        <dbReference type="EC" id="5.3.1.23"/>
    </reaction>
</comment>
<comment type="similarity">
    <text evidence="2">Belongs to the eIF-2B alpha/beta/delta subunits family. MtnA subfamily.</text>
</comment>